<feature type="chain" id="PRO_0000217854" description="Uncharacterized PPE family protein PPE58">
    <location>
        <begin position="1"/>
        <end position="232"/>
    </location>
</feature>
<feature type="region of interest" description="Disordered" evidence="1">
    <location>
        <begin position="123"/>
        <end position="147"/>
    </location>
</feature>
<feature type="region of interest" description="Disordered" evidence="1">
    <location>
        <begin position="169"/>
        <end position="200"/>
    </location>
</feature>
<comment type="similarity">
    <text evidence="2">Belongs to the mycobacterial PPE family.</text>
</comment>
<dbReference type="EMBL" id="AL123456">
    <property type="protein sequence ID" value="CCP46248.1"/>
    <property type="molecule type" value="Genomic_DNA"/>
</dbReference>
<dbReference type="PIR" id="G70738">
    <property type="entry name" value="G70738"/>
</dbReference>
<dbReference type="RefSeq" id="WP_003912229.1">
    <property type="nucleotide sequence ID" value="NC_000962.3"/>
</dbReference>
<dbReference type="RefSeq" id="YP_177972.1">
    <property type="nucleotide sequence ID" value="NC_000962.3"/>
</dbReference>
<dbReference type="SMR" id="Q50702"/>
<dbReference type="STRING" id="83332.Rv3426"/>
<dbReference type="PaxDb" id="83332-Rv3426"/>
<dbReference type="DNASU" id="887622"/>
<dbReference type="GeneID" id="887622"/>
<dbReference type="KEGG" id="mtu:Rv3426"/>
<dbReference type="KEGG" id="mtv:RVBD_3426"/>
<dbReference type="TubercuList" id="Rv3426"/>
<dbReference type="eggNOG" id="COG5651">
    <property type="taxonomic scope" value="Bacteria"/>
</dbReference>
<dbReference type="InParanoid" id="Q50702"/>
<dbReference type="PhylomeDB" id="Q50702"/>
<dbReference type="Proteomes" id="UP000001584">
    <property type="component" value="Chromosome"/>
</dbReference>
<dbReference type="GO" id="GO:0005886">
    <property type="term" value="C:plasma membrane"/>
    <property type="evidence" value="ECO:0007005"/>
    <property type="project" value="MTBBASE"/>
</dbReference>
<dbReference type="GO" id="GO:0052572">
    <property type="term" value="P:response to host immune response"/>
    <property type="evidence" value="ECO:0000318"/>
    <property type="project" value="GO_Central"/>
</dbReference>
<dbReference type="Gene3D" id="1.20.1260.20">
    <property type="entry name" value="PPE superfamily"/>
    <property type="match status" value="1"/>
</dbReference>
<dbReference type="InterPro" id="IPR000030">
    <property type="entry name" value="PPE_dom"/>
</dbReference>
<dbReference type="InterPro" id="IPR038332">
    <property type="entry name" value="PPE_sf"/>
</dbReference>
<dbReference type="PANTHER" id="PTHR46766">
    <property type="entry name" value="GLUTAMINE-RICH PROTEIN 2"/>
    <property type="match status" value="1"/>
</dbReference>
<dbReference type="PANTHER" id="PTHR46766:SF1">
    <property type="entry name" value="GLUTAMINE-RICH PROTEIN 2"/>
    <property type="match status" value="1"/>
</dbReference>
<dbReference type="Pfam" id="PF00823">
    <property type="entry name" value="PPE"/>
    <property type="match status" value="1"/>
</dbReference>
<dbReference type="SUPFAM" id="SSF140459">
    <property type="entry name" value="PE/PPE dimer-like"/>
    <property type="match status" value="1"/>
</dbReference>
<sequence>MHLMIPAEYISNVIYEGPRADSLYAADQRLRQLADSVRTTAESLNTTLDELHENWKGSSSEWMADAALRYLDWLSKHSRQILRTARVIESLVMAYEETLLRVVPPATIANNREEVRRLIASNVAGGKHSSNRRPRGTIRAVPGRKYPSNGPLSKLDPICAIEAAPMAGAAADPQERVGPRGRRGLAGQQQCRGRPGPSLRCSHDTPRFQMNQAFHTMVNMLLTCFACQEKPR</sequence>
<keyword id="KW-1185">Reference proteome</keyword>
<accession>Q50702</accession>
<accession>L0TCH8</accession>
<protein>
    <recommendedName>
        <fullName>Uncharacterized PPE family protein PPE58</fullName>
    </recommendedName>
</protein>
<gene>
    <name type="primary">PPE58</name>
    <name type="ordered locus">Rv3426</name>
    <name type="ORF">MTCY78.03c</name>
</gene>
<reference key="1">
    <citation type="journal article" date="1998" name="Nature">
        <title>Deciphering the biology of Mycobacterium tuberculosis from the complete genome sequence.</title>
        <authorList>
            <person name="Cole S.T."/>
            <person name="Brosch R."/>
            <person name="Parkhill J."/>
            <person name="Garnier T."/>
            <person name="Churcher C.M."/>
            <person name="Harris D.E."/>
            <person name="Gordon S.V."/>
            <person name="Eiglmeier K."/>
            <person name="Gas S."/>
            <person name="Barry C.E. III"/>
            <person name="Tekaia F."/>
            <person name="Badcock K."/>
            <person name="Basham D."/>
            <person name="Brown D."/>
            <person name="Chillingworth T."/>
            <person name="Connor R."/>
            <person name="Davies R.M."/>
            <person name="Devlin K."/>
            <person name="Feltwell T."/>
            <person name="Gentles S."/>
            <person name="Hamlin N."/>
            <person name="Holroyd S."/>
            <person name="Hornsby T."/>
            <person name="Jagels K."/>
            <person name="Krogh A."/>
            <person name="McLean J."/>
            <person name="Moule S."/>
            <person name="Murphy L.D."/>
            <person name="Oliver S."/>
            <person name="Osborne J."/>
            <person name="Quail M.A."/>
            <person name="Rajandream M.A."/>
            <person name="Rogers J."/>
            <person name="Rutter S."/>
            <person name="Seeger K."/>
            <person name="Skelton S."/>
            <person name="Squares S."/>
            <person name="Squares R."/>
            <person name="Sulston J.E."/>
            <person name="Taylor K."/>
            <person name="Whitehead S."/>
            <person name="Barrell B.G."/>
        </authorList>
    </citation>
    <scope>NUCLEOTIDE SEQUENCE [LARGE SCALE GENOMIC DNA]</scope>
    <source>
        <strain>ATCC 25618 / H37Rv</strain>
    </source>
</reference>
<organism>
    <name type="scientific">Mycobacterium tuberculosis (strain ATCC 25618 / H37Rv)</name>
    <dbReference type="NCBI Taxonomy" id="83332"/>
    <lineage>
        <taxon>Bacteria</taxon>
        <taxon>Bacillati</taxon>
        <taxon>Actinomycetota</taxon>
        <taxon>Actinomycetes</taxon>
        <taxon>Mycobacteriales</taxon>
        <taxon>Mycobacteriaceae</taxon>
        <taxon>Mycobacterium</taxon>
        <taxon>Mycobacterium tuberculosis complex</taxon>
    </lineage>
</organism>
<proteinExistence type="inferred from homology"/>
<evidence type="ECO:0000256" key="1">
    <source>
        <dbReference type="SAM" id="MobiDB-lite"/>
    </source>
</evidence>
<evidence type="ECO:0000305" key="2"/>
<name>PPE58_MYCTU</name>